<reference key="1">
    <citation type="journal article" date="2009" name="Infect. Immun.">
        <title>Comparative genomics reveal extensive transposon-mediated genomic plasticity and diversity among potential effector proteins within the genus Coxiella.</title>
        <authorList>
            <person name="Beare P.A."/>
            <person name="Unsworth N."/>
            <person name="Andoh M."/>
            <person name="Voth D.E."/>
            <person name="Omsland A."/>
            <person name="Gilk S.D."/>
            <person name="Williams K.P."/>
            <person name="Sobral B.W."/>
            <person name="Kupko J.J. III"/>
            <person name="Porcella S.F."/>
            <person name="Samuel J.E."/>
            <person name="Heinzen R.A."/>
        </authorList>
    </citation>
    <scope>NUCLEOTIDE SEQUENCE [LARGE SCALE GENOMIC DNA]</scope>
    <source>
        <strain>CbuK_Q154</strain>
    </source>
</reference>
<organism>
    <name type="scientific">Coxiella burnetii (strain CbuK_Q154)</name>
    <name type="common">Coxiella burnetii (strain Q154)</name>
    <dbReference type="NCBI Taxonomy" id="434924"/>
    <lineage>
        <taxon>Bacteria</taxon>
        <taxon>Pseudomonadati</taxon>
        <taxon>Pseudomonadota</taxon>
        <taxon>Gammaproteobacteria</taxon>
        <taxon>Legionellales</taxon>
        <taxon>Coxiellaceae</taxon>
        <taxon>Coxiella</taxon>
    </lineage>
</organism>
<accession>B6J855</accession>
<sequence>MISIDVQHATQFEDLPSLSNIEQWVETALQFIVTDKNKSALTIRFIDKEESTELNEHYRHKKGPTNVLSFPDEPIPGFPSESFGDLAICAPLVAEEAHAQHKTTEAHFAHLITHGFLHLLGYDHVENEDAEEMENLEIKILSQLGFENPYEE</sequence>
<proteinExistence type="inferred from homology"/>
<protein>
    <recommendedName>
        <fullName evidence="1">Endoribonuclease YbeY</fullName>
        <ecNumber evidence="1">3.1.-.-</ecNumber>
    </recommendedName>
</protein>
<name>YBEY_COXB1</name>
<keyword id="KW-0963">Cytoplasm</keyword>
<keyword id="KW-0255">Endonuclease</keyword>
<keyword id="KW-0378">Hydrolase</keyword>
<keyword id="KW-0479">Metal-binding</keyword>
<keyword id="KW-0540">Nuclease</keyword>
<keyword id="KW-0690">Ribosome biogenesis</keyword>
<keyword id="KW-0698">rRNA processing</keyword>
<keyword id="KW-0862">Zinc</keyword>
<feature type="chain" id="PRO_1000089169" description="Endoribonuclease YbeY">
    <location>
        <begin position="1"/>
        <end position="152"/>
    </location>
</feature>
<feature type="binding site" evidence="1">
    <location>
        <position position="114"/>
    </location>
    <ligand>
        <name>Zn(2+)</name>
        <dbReference type="ChEBI" id="CHEBI:29105"/>
        <note>catalytic</note>
    </ligand>
</feature>
<feature type="binding site" evidence="1">
    <location>
        <position position="118"/>
    </location>
    <ligand>
        <name>Zn(2+)</name>
        <dbReference type="ChEBI" id="CHEBI:29105"/>
        <note>catalytic</note>
    </ligand>
</feature>
<feature type="binding site" evidence="1">
    <location>
        <position position="124"/>
    </location>
    <ligand>
        <name>Zn(2+)</name>
        <dbReference type="ChEBI" id="CHEBI:29105"/>
        <note>catalytic</note>
    </ligand>
</feature>
<dbReference type="EC" id="3.1.-.-" evidence="1"/>
<dbReference type="EMBL" id="CP001020">
    <property type="protein sequence ID" value="ACJ20454.1"/>
    <property type="molecule type" value="Genomic_DNA"/>
</dbReference>
<dbReference type="RefSeq" id="WP_005771102.1">
    <property type="nucleotide sequence ID" value="NC_011528.1"/>
</dbReference>
<dbReference type="SMR" id="B6J855"/>
<dbReference type="KEGG" id="cbc:CbuK_1270"/>
<dbReference type="HOGENOM" id="CLU_106710_0_1_6"/>
<dbReference type="GO" id="GO:0005737">
    <property type="term" value="C:cytoplasm"/>
    <property type="evidence" value="ECO:0007669"/>
    <property type="project" value="UniProtKB-SubCell"/>
</dbReference>
<dbReference type="GO" id="GO:0004222">
    <property type="term" value="F:metalloendopeptidase activity"/>
    <property type="evidence" value="ECO:0007669"/>
    <property type="project" value="InterPro"/>
</dbReference>
<dbReference type="GO" id="GO:0004521">
    <property type="term" value="F:RNA endonuclease activity"/>
    <property type="evidence" value="ECO:0007669"/>
    <property type="project" value="UniProtKB-UniRule"/>
</dbReference>
<dbReference type="GO" id="GO:0008270">
    <property type="term" value="F:zinc ion binding"/>
    <property type="evidence" value="ECO:0007669"/>
    <property type="project" value="UniProtKB-UniRule"/>
</dbReference>
<dbReference type="GO" id="GO:0006364">
    <property type="term" value="P:rRNA processing"/>
    <property type="evidence" value="ECO:0007669"/>
    <property type="project" value="UniProtKB-UniRule"/>
</dbReference>
<dbReference type="Gene3D" id="3.40.390.30">
    <property type="entry name" value="Metalloproteases ('zincins'), catalytic domain"/>
    <property type="match status" value="1"/>
</dbReference>
<dbReference type="HAMAP" id="MF_00009">
    <property type="entry name" value="Endoribonucl_YbeY"/>
    <property type="match status" value="1"/>
</dbReference>
<dbReference type="InterPro" id="IPR023091">
    <property type="entry name" value="MetalPrtase_cat_dom_sf_prd"/>
</dbReference>
<dbReference type="InterPro" id="IPR002036">
    <property type="entry name" value="YbeY"/>
</dbReference>
<dbReference type="InterPro" id="IPR020549">
    <property type="entry name" value="YbeY_CS"/>
</dbReference>
<dbReference type="NCBIfam" id="TIGR00043">
    <property type="entry name" value="rRNA maturation RNase YbeY"/>
    <property type="match status" value="1"/>
</dbReference>
<dbReference type="PANTHER" id="PTHR46986">
    <property type="entry name" value="ENDORIBONUCLEASE YBEY, CHLOROPLASTIC"/>
    <property type="match status" value="1"/>
</dbReference>
<dbReference type="PANTHER" id="PTHR46986:SF1">
    <property type="entry name" value="ENDORIBONUCLEASE YBEY, CHLOROPLASTIC"/>
    <property type="match status" value="1"/>
</dbReference>
<dbReference type="Pfam" id="PF02130">
    <property type="entry name" value="YbeY"/>
    <property type="match status" value="1"/>
</dbReference>
<dbReference type="SUPFAM" id="SSF55486">
    <property type="entry name" value="Metalloproteases ('zincins'), catalytic domain"/>
    <property type="match status" value="1"/>
</dbReference>
<dbReference type="PROSITE" id="PS01306">
    <property type="entry name" value="UPF0054"/>
    <property type="match status" value="1"/>
</dbReference>
<comment type="function">
    <text evidence="1">Single strand-specific metallo-endoribonuclease involved in late-stage 70S ribosome quality control and in maturation of the 3' terminus of the 16S rRNA.</text>
</comment>
<comment type="cofactor">
    <cofactor evidence="1">
        <name>Zn(2+)</name>
        <dbReference type="ChEBI" id="CHEBI:29105"/>
    </cofactor>
    <text evidence="1">Binds 1 zinc ion.</text>
</comment>
<comment type="subcellular location">
    <subcellularLocation>
        <location evidence="1">Cytoplasm</location>
    </subcellularLocation>
</comment>
<comment type="similarity">
    <text evidence="1">Belongs to the endoribonuclease YbeY family.</text>
</comment>
<evidence type="ECO:0000255" key="1">
    <source>
        <dbReference type="HAMAP-Rule" id="MF_00009"/>
    </source>
</evidence>
<gene>
    <name evidence="1" type="primary">ybeY</name>
    <name type="ordered locus">CbuK_1270</name>
</gene>